<evidence type="ECO:0000255" key="1"/>
<evidence type="ECO:0000269" key="2">
    <source>
    </source>
</evidence>
<evidence type="ECO:0000305" key="3"/>
<dbReference type="EMBL" id="X72298">
    <property type="protein sequence ID" value="CAA51044.1"/>
    <property type="molecule type" value="Genomic_DNA"/>
</dbReference>
<dbReference type="EMBL" id="U00006">
    <property type="protein sequence ID" value="AAC43167.1"/>
    <property type="molecule type" value="Genomic_DNA"/>
</dbReference>
<dbReference type="EMBL" id="U00096">
    <property type="protein sequence ID" value="AAC77043.1"/>
    <property type="molecule type" value="Genomic_DNA"/>
</dbReference>
<dbReference type="EMBL" id="AP009048">
    <property type="protein sequence ID" value="BAE78075.1"/>
    <property type="molecule type" value="Genomic_DNA"/>
</dbReference>
<dbReference type="PIR" id="H65215">
    <property type="entry name" value="D57987"/>
</dbReference>
<dbReference type="RefSeq" id="NP_418497.1">
    <property type="nucleotide sequence ID" value="NC_000913.3"/>
</dbReference>
<dbReference type="RefSeq" id="WP_000195171.1">
    <property type="nucleotide sequence ID" value="NZ_SSZK01000016.1"/>
</dbReference>
<dbReference type="SMR" id="P32709"/>
<dbReference type="BioGRID" id="4262676">
    <property type="interactions" value="18"/>
</dbReference>
<dbReference type="FunCoup" id="P32709">
    <property type="interactions" value="96"/>
</dbReference>
<dbReference type="STRING" id="511145.b4073"/>
<dbReference type="TCDB" id="5.A.3.5.3">
    <property type="family name" value="the prokaryotic molybdopterin-containing oxidoreductase (pmo) family"/>
</dbReference>
<dbReference type="jPOST" id="P32709"/>
<dbReference type="PaxDb" id="511145-b4073"/>
<dbReference type="EnsemblBacteria" id="AAC77043">
    <property type="protein sequence ID" value="AAC77043"/>
    <property type="gene ID" value="b4073"/>
</dbReference>
<dbReference type="GeneID" id="75169596"/>
<dbReference type="GeneID" id="948580"/>
<dbReference type="KEGG" id="ecj:JW4034"/>
<dbReference type="KEGG" id="eco:b4073"/>
<dbReference type="KEGG" id="ecoc:C3026_22015"/>
<dbReference type="PATRIC" id="fig|1411691.4.peg.2631"/>
<dbReference type="EchoBASE" id="EB1890"/>
<dbReference type="eggNOG" id="COG3301">
    <property type="taxonomic scope" value="Bacteria"/>
</dbReference>
<dbReference type="HOGENOM" id="CLU_045348_1_2_6"/>
<dbReference type="InParanoid" id="P32709"/>
<dbReference type="OMA" id="KLMFNYQ"/>
<dbReference type="OrthoDB" id="31166at2"/>
<dbReference type="PhylomeDB" id="P32709"/>
<dbReference type="BioCyc" id="EcoCyc:NRFD-MONOMER"/>
<dbReference type="PRO" id="PR:P32709"/>
<dbReference type="Proteomes" id="UP000000625">
    <property type="component" value="Chromosome"/>
</dbReference>
<dbReference type="GO" id="GO:0005886">
    <property type="term" value="C:plasma membrane"/>
    <property type="evidence" value="ECO:0000314"/>
    <property type="project" value="EcoCyc"/>
</dbReference>
<dbReference type="FunFam" id="1.20.1630.10:FF:000001">
    <property type="entry name" value="Formate-dependent nitrite reductase subunit NrfD"/>
    <property type="match status" value="1"/>
</dbReference>
<dbReference type="Gene3D" id="1.20.1630.10">
    <property type="entry name" value="Formate dehydrogenase/DMSO reductase domain"/>
    <property type="match status" value="1"/>
</dbReference>
<dbReference type="InterPro" id="IPR052049">
    <property type="entry name" value="Electron_transfer_protein"/>
</dbReference>
<dbReference type="InterPro" id="IPR017566">
    <property type="entry name" value="NrfD"/>
</dbReference>
<dbReference type="InterPro" id="IPR005614">
    <property type="entry name" value="NrfD-like"/>
</dbReference>
<dbReference type="NCBIfam" id="TIGR03148">
    <property type="entry name" value="cyt_nit_nrfD"/>
    <property type="match status" value="1"/>
</dbReference>
<dbReference type="PANTHER" id="PTHR34856">
    <property type="entry name" value="PROTEIN NRFD"/>
    <property type="match status" value="1"/>
</dbReference>
<dbReference type="PANTHER" id="PTHR34856:SF2">
    <property type="entry name" value="PROTEIN NRFD"/>
    <property type="match status" value="1"/>
</dbReference>
<dbReference type="Pfam" id="PF03916">
    <property type="entry name" value="NrfD"/>
    <property type="match status" value="1"/>
</dbReference>
<proteinExistence type="inferred from homology"/>
<reference key="1">
    <citation type="journal article" date="1994" name="Mol. Microbiol.">
        <title>A seven-gene operon essential for formate-dependent nitrite reduction to ammonia by enteric bacteria.</title>
        <authorList>
            <person name="Hussain H.A."/>
            <person name="Grove J."/>
            <person name="Griffiths L."/>
            <person name="Busby S."/>
            <person name="Cole J."/>
        </authorList>
    </citation>
    <scope>NUCLEOTIDE SEQUENCE [GENOMIC DNA]</scope>
</reference>
<reference key="2">
    <citation type="journal article" date="1993" name="Nucleic Acids Res.">
        <title>Analysis of the Escherichia coli genome. IV. DNA sequence of the region from 89.2 to 92.8 minutes.</title>
        <authorList>
            <person name="Blattner F.R."/>
            <person name="Burland V.D."/>
            <person name="Plunkett G. III"/>
            <person name="Sofia H.J."/>
            <person name="Daniels D.L."/>
        </authorList>
    </citation>
    <scope>NUCLEOTIDE SEQUENCE [LARGE SCALE GENOMIC DNA]</scope>
    <source>
        <strain>K12 / MG1655 / ATCC 47076</strain>
    </source>
</reference>
<reference key="3">
    <citation type="journal article" date="1997" name="Science">
        <title>The complete genome sequence of Escherichia coli K-12.</title>
        <authorList>
            <person name="Blattner F.R."/>
            <person name="Plunkett G. III"/>
            <person name="Bloch C.A."/>
            <person name="Perna N.T."/>
            <person name="Burland V."/>
            <person name="Riley M."/>
            <person name="Collado-Vides J."/>
            <person name="Glasner J.D."/>
            <person name="Rode C.K."/>
            <person name="Mayhew G.F."/>
            <person name="Gregor J."/>
            <person name="Davis N.W."/>
            <person name="Kirkpatrick H.A."/>
            <person name="Goeden M.A."/>
            <person name="Rose D.J."/>
            <person name="Mau B."/>
            <person name="Shao Y."/>
        </authorList>
    </citation>
    <scope>NUCLEOTIDE SEQUENCE [LARGE SCALE GENOMIC DNA]</scope>
    <source>
        <strain>K12 / MG1655 / ATCC 47076</strain>
    </source>
</reference>
<reference key="4">
    <citation type="journal article" date="2006" name="Mol. Syst. Biol.">
        <title>Highly accurate genome sequences of Escherichia coli K-12 strains MG1655 and W3110.</title>
        <authorList>
            <person name="Hayashi K."/>
            <person name="Morooka N."/>
            <person name="Yamamoto Y."/>
            <person name="Fujita K."/>
            <person name="Isono K."/>
            <person name="Choi S."/>
            <person name="Ohtsubo E."/>
            <person name="Baba T."/>
            <person name="Wanner B.L."/>
            <person name="Mori H."/>
            <person name="Horiuchi T."/>
        </authorList>
    </citation>
    <scope>NUCLEOTIDE SEQUENCE [LARGE SCALE GENOMIC DNA]</scope>
    <source>
        <strain>K12 / W3110 / ATCC 27325 / DSM 5911</strain>
    </source>
</reference>
<reference key="5">
    <citation type="journal article" date="2005" name="Science">
        <title>Global topology analysis of the Escherichia coli inner membrane proteome.</title>
        <authorList>
            <person name="Daley D.O."/>
            <person name="Rapp M."/>
            <person name="Granseth E."/>
            <person name="Melen K."/>
            <person name="Drew D."/>
            <person name="von Heijne G."/>
        </authorList>
    </citation>
    <scope>SUBCELLULAR LOCATION</scope>
    <source>
        <strain>K12 / MG1655 / ATCC 47076</strain>
    </source>
</reference>
<gene>
    <name type="primary">nrfD</name>
    <name type="synonym">yjcK</name>
    <name type="ordered locus">b4073</name>
    <name type="ordered locus">JW4034</name>
</gene>
<accession>P32709</accession>
<accession>Q2M6N1</accession>
<organism>
    <name type="scientific">Escherichia coli (strain K12)</name>
    <dbReference type="NCBI Taxonomy" id="83333"/>
    <lineage>
        <taxon>Bacteria</taxon>
        <taxon>Pseudomonadati</taxon>
        <taxon>Pseudomonadota</taxon>
        <taxon>Gammaproteobacteria</taxon>
        <taxon>Enterobacterales</taxon>
        <taxon>Enterobacteriaceae</taxon>
        <taxon>Escherichia</taxon>
    </lineage>
</organism>
<sequence>MTQTSAFHFESLVWDWPIAIYLFLIGISAGLVTLAVLLRRFYPQAGGADSTLLRTTLIVGPGAVILGLLILVFHLTRPWTFWKLMFHYSFTSVMSMGVMLFQLYMVVLVLWLAKIFEHDLLALQQRWLPKLGIVQKVLSLLTPVHRGLETLMLVLAVLLGAYTGFLLSALKSYPFLNNPILPVLFLFSGISSGAAVALIAMAIRQRSNPHSTEAQFVHRMEIPVVWGEIFLLVAFFVGLALGDDGKVRALVAALGGGFWTWWFWLGVAGLGLIVPMLLKPWVNRSSGIPAVLAACGASLVGVLMLRFFILYAGQLTVA</sequence>
<comment type="function">
    <text>Probably involved in the transfer of electrons from the quinone pool to the type-c cytochromes.</text>
</comment>
<comment type="subcellular location">
    <subcellularLocation>
        <location evidence="2">Cell inner membrane</location>
        <topology evidence="2">Multi-pass membrane protein</topology>
    </subcellularLocation>
</comment>
<comment type="similarity">
    <text evidence="3">Belongs to the NrfD family.</text>
</comment>
<feature type="chain" id="PRO_0000159322" description="Protein NrfD">
    <location>
        <begin position="1"/>
        <end position="318"/>
    </location>
</feature>
<feature type="transmembrane region" description="Helical" evidence="1">
    <location>
        <begin position="18"/>
        <end position="38"/>
    </location>
</feature>
<feature type="transmembrane region" description="Helical" evidence="1">
    <location>
        <begin position="57"/>
        <end position="73"/>
    </location>
</feature>
<feature type="transmembrane region" description="Helical" evidence="1">
    <location>
        <begin position="90"/>
        <end position="112"/>
    </location>
</feature>
<feature type="transmembrane region" description="Helical" evidence="1">
    <location>
        <begin position="150"/>
        <end position="170"/>
    </location>
</feature>
<feature type="transmembrane region" description="Helical" evidence="1">
    <location>
        <begin position="180"/>
        <end position="199"/>
    </location>
</feature>
<feature type="transmembrane region" description="Helical" evidence="1">
    <location>
        <begin position="222"/>
        <end position="242"/>
    </location>
</feature>
<feature type="transmembrane region" description="Helical" evidence="1">
    <location>
        <begin position="258"/>
        <end position="278"/>
    </location>
</feature>
<feature type="transmembrane region" description="Helical" evidence="1">
    <location>
        <begin position="288"/>
        <end position="310"/>
    </location>
</feature>
<feature type="sequence conflict" description="In Ref. 1; CAA51044." evidence="3" ref="1">
    <original>L</original>
    <variation>V</variation>
    <location>
        <position position="141"/>
    </location>
</feature>
<feature type="sequence conflict" description="In Ref. 1; CAA51044." evidence="3" ref="1">
    <original>A</original>
    <variation>R</variation>
    <location>
        <position position="202"/>
    </location>
</feature>
<name>NRFD_ECOLI</name>
<keyword id="KW-0997">Cell inner membrane</keyword>
<keyword id="KW-1003">Cell membrane</keyword>
<keyword id="KW-0472">Membrane</keyword>
<keyword id="KW-1185">Reference proteome</keyword>
<keyword id="KW-0812">Transmembrane</keyword>
<keyword id="KW-1133">Transmembrane helix</keyword>
<protein>
    <recommendedName>
        <fullName>Protein NrfD</fullName>
    </recommendedName>
</protein>